<gene>
    <name type="ordered locus">CKL_3017</name>
</gene>
<protein>
    <recommendedName>
        <fullName>Uncharacterized transporter CKL_3017</fullName>
    </recommendedName>
    <alternativeName>
        <fullName>ORFY</fullName>
    </alternativeName>
</protein>
<reference key="1">
    <citation type="journal article" date="1996" name="J. Bacteriol.">
        <title>Molecular analysis of the anaerobic succinate degradation pathway in Clostridium kluyveri.</title>
        <authorList>
            <person name="Soehling B."/>
            <person name="Gottschalk G."/>
        </authorList>
    </citation>
    <scope>NUCLEOTIDE SEQUENCE [GENOMIC DNA]</scope>
</reference>
<reference key="2">
    <citation type="journal article" date="2008" name="Proc. Natl. Acad. Sci. U.S.A.">
        <title>The genome of Clostridium kluyveri, a strict anaerobe with unique metabolic features.</title>
        <authorList>
            <person name="Seedorf H."/>
            <person name="Fricke W.F."/>
            <person name="Veith B."/>
            <person name="Brueggemann H."/>
            <person name="Liesegang H."/>
            <person name="Strittmatter A."/>
            <person name="Miethke M."/>
            <person name="Buckel W."/>
            <person name="Hinderberger J."/>
            <person name="Li F."/>
            <person name="Hagemeier C."/>
            <person name="Thauer R.K."/>
            <person name="Gottschalk G."/>
        </authorList>
    </citation>
    <scope>NUCLEOTIDE SEQUENCE [LARGE SCALE GENOMIC DNA]</scope>
    <source>
        <strain>ATCC 8527 / DSM 555 / NBRC 12016 / NCIMB 10680 / K1</strain>
    </source>
</reference>
<accession>P38943</accession>
<accession>A5N1M9</accession>
<organism>
    <name type="scientific">Clostridium kluyveri (strain ATCC 8527 / DSM 555 / NBRC 12016 / NCIMB 10680 / K1)</name>
    <dbReference type="NCBI Taxonomy" id="431943"/>
    <lineage>
        <taxon>Bacteria</taxon>
        <taxon>Bacillati</taxon>
        <taxon>Bacillota</taxon>
        <taxon>Clostridia</taxon>
        <taxon>Eubacteriales</taxon>
        <taxon>Clostridiaceae</taxon>
        <taxon>Clostridium</taxon>
    </lineage>
</organism>
<dbReference type="EMBL" id="L21902">
    <property type="protein sequence ID" value="AAA92345.1"/>
    <property type="molecule type" value="Genomic_DNA"/>
</dbReference>
<dbReference type="EMBL" id="CP000673">
    <property type="protein sequence ID" value="EDK35025.1"/>
    <property type="molecule type" value="Genomic_DNA"/>
</dbReference>
<dbReference type="RefSeq" id="WP_012103360.1">
    <property type="nucleotide sequence ID" value="NC_009706.1"/>
</dbReference>
<dbReference type="SMR" id="P38943"/>
<dbReference type="STRING" id="431943.CKL_3017"/>
<dbReference type="KEGG" id="ckl:CKL_3017"/>
<dbReference type="eggNOG" id="COG0697">
    <property type="taxonomic scope" value="Bacteria"/>
</dbReference>
<dbReference type="HOGENOM" id="CLU_033863_13_0_9"/>
<dbReference type="Proteomes" id="UP000002411">
    <property type="component" value="Chromosome"/>
</dbReference>
<dbReference type="GO" id="GO:0005886">
    <property type="term" value="C:plasma membrane"/>
    <property type="evidence" value="ECO:0007669"/>
    <property type="project" value="UniProtKB-SubCell"/>
</dbReference>
<dbReference type="InterPro" id="IPR050638">
    <property type="entry name" value="AA-Vitamin_Transporters"/>
</dbReference>
<dbReference type="InterPro" id="IPR000620">
    <property type="entry name" value="EamA_dom"/>
</dbReference>
<dbReference type="PANTHER" id="PTHR32322:SF2">
    <property type="entry name" value="EAMA DOMAIN-CONTAINING PROTEIN"/>
    <property type="match status" value="1"/>
</dbReference>
<dbReference type="PANTHER" id="PTHR32322">
    <property type="entry name" value="INNER MEMBRANE TRANSPORTER"/>
    <property type="match status" value="1"/>
</dbReference>
<dbReference type="Pfam" id="PF00892">
    <property type="entry name" value="EamA"/>
    <property type="match status" value="2"/>
</dbReference>
<dbReference type="SUPFAM" id="SSF103481">
    <property type="entry name" value="Multidrug resistance efflux transporter EmrE"/>
    <property type="match status" value="2"/>
</dbReference>
<feature type="chain" id="PRO_0000108199" description="Uncharacterized transporter CKL_3017">
    <location>
        <begin position="1"/>
        <end position="311"/>
    </location>
</feature>
<feature type="transmembrane region" description="Helical" evidence="1">
    <location>
        <begin position="6"/>
        <end position="26"/>
    </location>
</feature>
<feature type="transmembrane region" description="Helical" evidence="1">
    <location>
        <begin position="33"/>
        <end position="53"/>
    </location>
</feature>
<feature type="transmembrane region" description="Helical" evidence="1">
    <location>
        <begin position="70"/>
        <end position="90"/>
    </location>
</feature>
<feature type="transmembrane region" description="Helical" evidence="1">
    <location>
        <begin position="97"/>
        <end position="117"/>
    </location>
</feature>
<feature type="transmembrane region" description="Helical" evidence="1">
    <location>
        <begin position="123"/>
        <end position="143"/>
    </location>
</feature>
<feature type="transmembrane region" description="Helical" evidence="1">
    <location>
        <begin position="155"/>
        <end position="175"/>
    </location>
</feature>
<feature type="transmembrane region" description="Helical" evidence="1">
    <location>
        <begin position="185"/>
        <end position="205"/>
    </location>
</feature>
<feature type="transmembrane region" description="Helical" evidence="1">
    <location>
        <begin position="219"/>
        <end position="239"/>
    </location>
</feature>
<feature type="transmembrane region" description="Helical" evidence="1">
    <location>
        <begin position="244"/>
        <end position="264"/>
    </location>
</feature>
<feature type="transmembrane region" description="Helical" evidence="1">
    <location>
        <begin position="265"/>
        <end position="285"/>
    </location>
</feature>
<feature type="domain" description="EamA 1">
    <location>
        <begin position="12"/>
        <end position="141"/>
    </location>
</feature>
<feature type="domain" description="EamA 2">
    <location>
        <begin position="166"/>
        <end position="292"/>
    </location>
</feature>
<comment type="subcellular location">
    <subcellularLocation>
        <location evidence="2">Cell membrane</location>
        <topology evidence="2">Multi-pass membrane protein</topology>
    </subcellularLocation>
</comment>
<comment type="similarity">
    <text evidence="2">Belongs to the EamA transporter family.</text>
</comment>
<proteinExistence type="inferred from homology"/>
<name>Y3017_CLOK5</name>
<evidence type="ECO:0000255" key="1"/>
<evidence type="ECO:0000305" key="2"/>
<keyword id="KW-1003">Cell membrane</keyword>
<keyword id="KW-0472">Membrane</keyword>
<keyword id="KW-1185">Reference proteome</keyword>
<keyword id="KW-0677">Repeat</keyword>
<keyword id="KW-0812">Transmembrane</keyword>
<keyword id="KW-1133">Transmembrane helix</keyword>
<keyword id="KW-0813">Transport</keyword>
<sequence>MKKGYIFILLTAIFYSTQEISGKMLAQKGAMDPFQVMMIVFLIGAIILLPMAVKDIKVKKLKLTGNDLGYLALCGILAVSISMSMLQFAVTYTKASTAAVLFCTNAVFTIPFAYFILKEKIKGITIVSIIVSLIGVVIIFNPAKVMEGIGGSRDLIGICFALVAAVVWSLYTVISKKRIEIYGGYVFNCISFFFGVIALLILLVVTGRPIFSGITLNNILVLLYMGIFIKAVGYICYLGAIKETSAVTASTVFLIKPALATVLAILILGESIEVNVVIGIVFIIIGSIINYSSNKKANDLKKVANTSSAES</sequence>